<protein>
    <recommendedName>
        <fullName>Deoxyuridine 5'-triphosphate nucleotidohydrolase</fullName>
        <shortName>dUTPase</shortName>
        <ecNumber>3.6.1.23</ecNumber>
    </recommendedName>
    <alternativeName>
        <fullName>dUTP pyrophosphatase</fullName>
    </alternativeName>
</protein>
<feature type="chain" id="PRO_0000182950" description="Deoxyuridine 5'-triphosphate nucleotidohydrolase">
    <location>
        <begin position="1"/>
        <end position="142"/>
    </location>
</feature>
<accession>P32208</accession>
<comment type="function">
    <text>This enzyme is involved in nucleotide metabolism: it produces dUMP, the immediate precursor of thymidine nucleotides and it decreases the intracellular concentration of dUTP so that uracil cannot be incorporated into DNA.</text>
</comment>
<comment type="catalytic activity">
    <reaction>
        <text>dUTP + H2O = dUMP + diphosphate + H(+)</text>
        <dbReference type="Rhea" id="RHEA:10248"/>
        <dbReference type="ChEBI" id="CHEBI:15377"/>
        <dbReference type="ChEBI" id="CHEBI:15378"/>
        <dbReference type="ChEBI" id="CHEBI:33019"/>
        <dbReference type="ChEBI" id="CHEBI:61555"/>
        <dbReference type="ChEBI" id="CHEBI:246422"/>
        <dbReference type="EC" id="3.6.1.23"/>
    </reaction>
</comment>
<comment type="cofactor">
    <cofactor evidence="1">
        <name>Mg(2+)</name>
        <dbReference type="ChEBI" id="CHEBI:18420"/>
    </cofactor>
</comment>
<comment type="similarity">
    <text evidence="2">Belongs to the dUTPase family.</text>
</comment>
<comment type="caution">
    <text evidence="2">Was originally thought to be a protease-like protein (pseudoprotease).</text>
</comment>
<reference key="1">
    <citation type="journal article" date="1993" name="Virology">
        <title>DNA sequence analysis of conserved and unique regions of swinepox virus: identification of genetic elements supporting phenotypic observations including a novel G protein-coupled receptor homologue.</title>
        <authorList>
            <person name="Massung R.F."/>
            <person name="Jayarama V."/>
            <person name="Moyer R.W."/>
        </authorList>
    </citation>
    <scope>NUCLEOTIDE SEQUENCE [GENOMIC DNA]</scope>
</reference>
<dbReference type="EC" id="3.6.1.23"/>
<dbReference type="EMBL" id="L22013">
    <property type="protein sequence ID" value="AAC37860.1"/>
    <property type="molecule type" value="Genomic_DNA"/>
</dbReference>
<dbReference type="SMR" id="P32208"/>
<dbReference type="GO" id="GO:0004170">
    <property type="term" value="F:dUTP diphosphatase activity"/>
    <property type="evidence" value="ECO:0007669"/>
    <property type="project" value="UniProtKB-EC"/>
</dbReference>
<dbReference type="GO" id="GO:0000287">
    <property type="term" value="F:magnesium ion binding"/>
    <property type="evidence" value="ECO:0007669"/>
    <property type="project" value="InterPro"/>
</dbReference>
<dbReference type="GO" id="GO:0006226">
    <property type="term" value="P:dUMP biosynthetic process"/>
    <property type="evidence" value="ECO:0007669"/>
    <property type="project" value="InterPro"/>
</dbReference>
<dbReference type="GO" id="GO:0046081">
    <property type="term" value="P:dUTP catabolic process"/>
    <property type="evidence" value="ECO:0007669"/>
    <property type="project" value="InterPro"/>
</dbReference>
<dbReference type="CDD" id="cd07557">
    <property type="entry name" value="trimeric_dUTPase"/>
    <property type="match status" value="1"/>
</dbReference>
<dbReference type="Gene3D" id="2.70.40.10">
    <property type="match status" value="1"/>
</dbReference>
<dbReference type="InterPro" id="IPR008181">
    <property type="entry name" value="dUTPase"/>
</dbReference>
<dbReference type="InterPro" id="IPR029054">
    <property type="entry name" value="dUTPase-like"/>
</dbReference>
<dbReference type="InterPro" id="IPR036157">
    <property type="entry name" value="dUTPase-like_sf"/>
</dbReference>
<dbReference type="InterPro" id="IPR033704">
    <property type="entry name" value="dUTPase_trimeric"/>
</dbReference>
<dbReference type="NCBIfam" id="TIGR00576">
    <property type="entry name" value="dut"/>
    <property type="match status" value="1"/>
</dbReference>
<dbReference type="NCBIfam" id="NF001862">
    <property type="entry name" value="PRK00601.1"/>
    <property type="match status" value="1"/>
</dbReference>
<dbReference type="PANTHER" id="PTHR11241">
    <property type="entry name" value="DEOXYURIDINE 5'-TRIPHOSPHATE NUCLEOTIDOHYDROLASE"/>
    <property type="match status" value="1"/>
</dbReference>
<dbReference type="PANTHER" id="PTHR11241:SF0">
    <property type="entry name" value="DEOXYURIDINE 5'-TRIPHOSPHATE NUCLEOTIDOHYDROLASE"/>
    <property type="match status" value="1"/>
</dbReference>
<dbReference type="Pfam" id="PF00692">
    <property type="entry name" value="dUTPase"/>
    <property type="match status" value="1"/>
</dbReference>
<dbReference type="SUPFAM" id="SSF51283">
    <property type="entry name" value="dUTPase-like"/>
    <property type="match status" value="1"/>
</dbReference>
<sequence length="142" mass="15750">MSLYVKCVKLSNNAIIPNRSMSGSAGYDLYSAYSYTVKPYNRILVRTDICLMIPDKCYGRISPRSGLSLNYNIDIGGGVIDSDYRGEIGIVFINNGCSDFNIKVGDRIAQIIFERVEYPIMEEVKCLEDTERGNSGFGSSGM</sequence>
<organism>
    <name type="scientific">Swinepox virus (strain Kasza)</name>
    <name type="common">SWPV</name>
    <dbReference type="NCBI Taxonomy" id="10277"/>
    <lineage>
        <taxon>Viruses</taxon>
        <taxon>Varidnaviria</taxon>
        <taxon>Bamfordvirae</taxon>
        <taxon>Nucleocytoviricota</taxon>
        <taxon>Pokkesviricetes</taxon>
        <taxon>Chitovirales</taxon>
        <taxon>Poxviridae</taxon>
        <taxon>Chordopoxvirinae</taxon>
        <taxon>Suipoxvirus</taxon>
        <taxon>Swinepox virus</taxon>
    </lineage>
</organism>
<proteinExistence type="inferred from homology"/>
<name>DUT_SWPVK</name>
<gene>
    <name type="primary">DUT</name>
    <name type="ORF">C11L</name>
</gene>
<keyword id="KW-0378">Hydrolase</keyword>
<keyword id="KW-0460">Magnesium</keyword>
<keyword id="KW-0479">Metal-binding</keyword>
<keyword id="KW-0546">Nucleotide metabolism</keyword>
<evidence type="ECO:0000250" key="1"/>
<evidence type="ECO:0000305" key="2"/>
<organismHost>
    <name type="scientific">Sus scrofa</name>
    <name type="common">Pig</name>
    <dbReference type="NCBI Taxonomy" id="9823"/>
</organismHost>